<organism>
    <name type="scientific">Escherichia coli O157:H7</name>
    <dbReference type="NCBI Taxonomy" id="83334"/>
    <lineage>
        <taxon>Bacteria</taxon>
        <taxon>Pseudomonadati</taxon>
        <taxon>Pseudomonadota</taxon>
        <taxon>Gammaproteobacteria</taxon>
        <taxon>Enterobacterales</taxon>
        <taxon>Enterobacteriaceae</taxon>
        <taxon>Escherichia</taxon>
    </lineage>
</organism>
<feature type="initiator methionine" description="Removed" evidence="1">
    <location>
        <position position="1"/>
    </location>
</feature>
<feature type="chain" id="PRO_0000200747" description="NAD(P)H dehydrogenase (quinone)">
    <location>
        <begin position="2"/>
        <end position="198"/>
    </location>
</feature>
<feature type="domain" description="Flavodoxin-like" evidence="2">
    <location>
        <begin position="4"/>
        <end position="189"/>
    </location>
</feature>
<feature type="binding site" evidence="2">
    <location>
        <begin position="10"/>
        <end position="15"/>
    </location>
    <ligand>
        <name>FMN</name>
        <dbReference type="ChEBI" id="CHEBI:58210"/>
    </ligand>
</feature>
<feature type="binding site" evidence="2">
    <location>
        <position position="12"/>
    </location>
    <ligand>
        <name>NAD(+)</name>
        <dbReference type="ChEBI" id="CHEBI:57540"/>
    </ligand>
</feature>
<feature type="binding site" evidence="2">
    <location>
        <begin position="78"/>
        <end position="80"/>
    </location>
    <ligand>
        <name>FMN</name>
        <dbReference type="ChEBI" id="CHEBI:58210"/>
    </ligand>
</feature>
<feature type="binding site" evidence="2">
    <location>
        <position position="98"/>
    </location>
    <ligand>
        <name>substrate</name>
    </ligand>
</feature>
<feature type="binding site" evidence="2">
    <location>
        <begin position="113"/>
        <end position="118"/>
    </location>
    <ligand>
        <name>FMN</name>
        <dbReference type="ChEBI" id="CHEBI:58210"/>
    </ligand>
</feature>
<feature type="binding site" evidence="2">
    <location>
        <position position="133"/>
    </location>
    <ligand>
        <name>FMN</name>
        <dbReference type="ChEBI" id="CHEBI:58210"/>
    </ligand>
</feature>
<accession>Q8X4B4</accession>
<accession>Q8X468</accession>
<accession>Q9KXH7</accession>
<proteinExistence type="uncertain"/>
<sequence>MAKVLVLYYSMYGHIETMARAVAEGASKVDGAEVVVKRVPETMSPQLFEKAGGKTQTAPVATPQELANYDAIIFGTPTRFGNMSGQMRTFLDQTGGLWASGALYGKLASVFSSTGTGGGQEQTITSTWTTLAHHGMVIVPIGYAAQELFDVSQVRGGTPYGATTIAGGDGSRQPSQEELSIARYQGEYVAGLAVKLNG</sequence>
<dbReference type="EC" id="1.6.5.2" evidence="2"/>
<dbReference type="EMBL" id="AE005174">
    <property type="protein sequence ID" value="AAG55552.1"/>
    <property type="status" value="ALT_INIT"/>
    <property type="molecule type" value="Genomic_DNA"/>
</dbReference>
<dbReference type="EMBL" id="AE005174">
    <property type="protein sequence ID" value="AAG55621.1"/>
    <property type="status" value="ALT_TERM"/>
    <property type="molecule type" value="Genomic_DNA"/>
</dbReference>
<dbReference type="EMBL" id="BA000007">
    <property type="status" value="NOT_ANNOTATED_CDS"/>
    <property type="molecule type" value="Genomic_DNA"/>
</dbReference>
<dbReference type="PIR" id="A85645">
    <property type="entry name" value="A85645"/>
</dbReference>
<dbReference type="PIR" id="D85636">
    <property type="entry name" value="D85636"/>
</dbReference>
<dbReference type="SMR" id="Q8X4B4"/>
<dbReference type="STRING" id="155864.Z1423"/>
<dbReference type="KEGG" id="ece:Z1423"/>
<dbReference type="KEGG" id="ece:Z1504"/>
<dbReference type="PATRIC" id="fig|83334.175.peg.2812"/>
<dbReference type="eggNOG" id="COG0655">
    <property type="taxonomic scope" value="Bacteria"/>
</dbReference>
<dbReference type="Proteomes" id="UP000000558">
    <property type="component" value="Chromosome"/>
</dbReference>
<dbReference type="Proteomes" id="UP000002519">
    <property type="component" value="Chromosome"/>
</dbReference>
<dbReference type="GO" id="GO:0016020">
    <property type="term" value="C:membrane"/>
    <property type="evidence" value="ECO:0007669"/>
    <property type="project" value="TreeGrafter"/>
</dbReference>
<dbReference type="GO" id="GO:0050660">
    <property type="term" value="F:flavin adenine dinucleotide binding"/>
    <property type="evidence" value="ECO:0007669"/>
    <property type="project" value="UniProtKB-UniRule"/>
</dbReference>
<dbReference type="GO" id="GO:0010181">
    <property type="term" value="F:FMN binding"/>
    <property type="evidence" value="ECO:0007669"/>
    <property type="project" value="InterPro"/>
</dbReference>
<dbReference type="GO" id="GO:0051287">
    <property type="term" value="F:NAD binding"/>
    <property type="evidence" value="ECO:0007669"/>
    <property type="project" value="UniProtKB-UniRule"/>
</dbReference>
<dbReference type="GO" id="GO:0050136">
    <property type="term" value="F:NADH:ubiquinone reductase (non-electrogenic) activity"/>
    <property type="evidence" value="ECO:0007669"/>
    <property type="project" value="RHEA"/>
</dbReference>
<dbReference type="GO" id="GO:0050661">
    <property type="term" value="F:NADP binding"/>
    <property type="evidence" value="ECO:0007669"/>
    <property type="project" value="UniProtKB-UniRule"/>
</dbReference>
<dbReference type="GO" id="GO:0008753">
    <property type="term" value="F:NADPH dehydrogenase (quinone) activity"/>
    <property type="evidence" value="ECO:0007669"/>
    <property type="project" value="RHEA"/>
</dbReference>
<dbReference type="FunFam" id="3.40.50.360:FF:000004">
    <property type="entry name" value="NAD(P)H dehydrogenase (quinone)"/>
    <property type="match status" value="1"/>
</dbReference>
<dbReference type="Gene3D" id="3.40.50.360">
    <property type="match status" value="1"/>
</dbReference>
<dbReference type="HAMAP" id="MF_01017">
    <property type="entry name" value="NQOR"/>
    <property type="match status" value="1"/>
</dbReference>
<dbReference type="InterPro" id="IPR008254">
    <property type="entry name" value="Flavodoxin/NO_synth"/>
</dbReference>
<dbReference type="InterPro" id="IPR029039">
    <property type="entry name" value="Flavoprotein-like_sf"/>
</dbReference>
<dbReference type="InterPro" id="IPR010089">
    <property type="entry name" value="Flavoprotein_WrbA-like"/>
</dbReference>
<dbReference type="InterPro" id="IPR005025">
    <property type="entry name" value="FMN_Rdtase-like_dom"/>
</dbReference>
<dbReference type="InterPro" id="IPR037513">
    <property type="entry name" value="NQO"/>
</dbReference>
<dbReference type="NCBIfam" id="TIGR01755">
    <property type="entry name" value="flav_wrbA"/>
    <property type="match status" value="1"/>
</dbReference>
<dbReference type="NCBIfam" id="NF002999">
    <property type="entry name" value="PRK03767.1"/>
    <property type="match status" value="1"/>
</dbReference>
<dbReference type="PANTHER" id="PTHR30546">
    <property type="entry name" value="FLAVODOXIN-RELATED PROTEIN WRBA-RELATED"/>
    <property type="match status" value="1"/>
</dbReference>
<dbReference type="PANTHER" id="PTHR30546:SF23">
    <property type="entry name" value="FLAVOPROTEIN-LIKE PROTEIN YCP4-RELATED"/>
    <property type="match status" value="1"/>
</dbReference>
<dbReference type="Pfam" id="PF03358">
    <property type="entry name" value="FMN_red"/>
    <property type="match status" value="1"/>
</dbReference>
<dbReference type="SUPFAM" id="SSF52218">
    <property type="entry name" value="Flavoproteins"/>
    <property type="match status" value="1"/>
</dbReference>
<dbReference type="PROSITE" id="PS50902">
    <property type="entry name" value="FLAVODOXIN_LIKE"/>
    <property type="match status" value="1"/>
</dbReference>
<keyword id="KW-0285">Flavoprotein</keyword>
<keyword id="KW-0288">FMN</keyword>
<keyword id="KW-0520">NAD</keyword>
<keyword id="KW-0521">NADP</keyword>
<keyword id="KW-0547">Nucleotide-binding</keyword>
<keyword id="KW-0560">Oxidoreductase</keyword>
<keyword id="KW-1185">Reference proteome</keyword>
<protein>
    <recommendedName>
        <fullName evidence="2">NAD(P)H dehydrogenase (quinone)</fullName>
        <ecNumber evidence="2">1.6.5.2</ecNumber>
    </recommendedName>
    <alternativeName>
        <fullName>Flavoprotein WrbA</fullName>
    </alternativeName>
    <alternativeName>
        <fullName evidence="2">NAD(P)H:quinone oxidoreductase</fullName>
        <shortName evidence="2">NQO</shortName>
    </alternativeName>
</protein>
<comment type="catalytic activity">
    <reaction evidence="2">
        <text>a quinone + NADH + H(+) = a quinol + NAD(+)</text>
        <dbReference type="Rhea" id="RHEA:46160"/>
        <dbReference type="ChEBI" id="CHEBI:15378"/>
        <dbReference type="ChEBI" id="CHEBI:24646"/>
        <dbReference type="ChEBI" id="CHEBI:57540"/>
        <dbReference type="ChEBI" id="CHEBI:57945"/>
        <dbReference type="ChEBI" id="CHEBI:132124"/>
        <dbReference type="EC" id="1.6.5.2"/>
    </reaction>
</comment>
<comment type="catalytic activity">
    <reaction evidence="2">
        <text>a quinone + NADPH + H(+) = a quinol + NADP(+)</text>
        <dbReference type="Rhea" id="RHEA:46164"/>
        <dbReference type="ChEBI" id="CHEBI:15378"/>
        <dbReference type="ChEBI" id="CHEBI:24646"/>
        <dbReference type="ChEBI" id="CHEBI:57783"/>
        <dbReference type="ChEBI" id="CHEBI:58349"/>
        <dbReference type="ChEBI" id="CHEBI:132124"/>
        <dbReference type="EC" id="1.6.5.2"/>
    </reaction>
</comment>
<comment type="cofactor">
    <cofactor evidence="2">
        <name>FMN</name>
        <dbReference type="ChEBI" id="CHEBI:58210"/>
    </cofactor>
    <text evidence="2">Binds 1 FMN per monomer.</text>
</comment>
<comment type="similarity">
    <text evidence="2">Belongs to the WrbA family.</text>
</comment>
<comment type="caution">
    <text evidence="3">Could be the product of a pseudogene. The original protein is interrupted by the insertion of the prophage VT2-Sakai between positions 18 and 19.</text>
</comment>
<comment type="sequence caution" evidence="3">
    <conflict type="erroneous initiation">
        <sequence resource="EMBL-CDS" id="AAG55552"/>
    </conflict>
    <text>Truncated N-terminus.</text>
</comment>
<comment type="sequence caution" evidence="3">
    <conflict type="erroneous termination">
        <sequence resource="EMBL-CDS" id="AAG55621"/>
    </conflict>
    <text>Truncated C-terminus.</text>
</comment>
<name>NQOR_ECO57</name>
<gene>
    <name type="ordered locus">Z1423/Z1504</name>
    <name type="ordered locus">ECs1159.1/ECs1251.1</name>
</gene>
<evidence type="ECO:0000250" key="1"/>
<evidence type="ECO:0000255" key="2">
    <source>
        <dbReference type="HAMAP-Rule" id="MF_01017"/>
    </source>
</evidence>
<evidence type="ECO:0000305" key="3"/>
<reference key="1">
    <citation type="journal article" date="2001" name="Nature">
        <title>Genome sequence of enterohaemorrhagic Escherichia coli O157:H7.</title>
        <authorList>
            <person name="Perna N.T."/>
            <person name="Plunkett G. III"/>
            <person name="Burland V."/>
            <person name="Mau B."/>
            <person name="Glasner J.D."/>
            <person name="Rose D.J."/>
            <person name="Mayhew G.F."/>
            <person name="Evans P.S."/>
            <person name="Gregor J."/>
            <person name="Kirkpatrick H.A."/>
            <person name="Posfai G."/>
            <person name="Hackett J."/>
            <person name="Klink S."/>
            <person name="Boutin A."/>
            <person name="Shao Y."/>
            <person name="Miller L."/>
            <person name="Grotbeck E.J."/>
            <person name="Davis N.W."/>
            <person name="Lim A."/>
            <person name="Dimalanta E.T."/>
            <person name="Potamousis K."/>
            <person name="Apodaca J."/>
            <person name="Anantharaman T.S."/>
            <person name="Lin J."/>
            <person name="Yen G."/>
            <person name="Schwartz D.C."/>
            <person name="Welch R.A."/>
            <person name="Blattner F.R."/>
        </authorList>
    </citation>
    <scope>NUCLEOTIDE SEQUENCE [LARGE SCALE GENOMIC DNA]</scope>
    <source>
        <strain>O157:H7 / EDL933 / ATCC 700927 / EHEC</strain>
    </source>
</reference>
<reference key="2">
    <citation type="journal article" date="2001" name="DNA Res.">
        <title>Complete genome sequence of enterohemorrhagic Escherichia coli O157:H7 and genomic comparison with a laboratory strain K-12.</title>
        <authorList>
            <person name="Hayashi T."/>
            <person name="Makino K."/>
            <person name="Ohnishi M."/>
            <person name="Kurokawa K."/>
            <person name="Ishii K."/>
            <person name="Yokoyama K."/>
            <person name="Han C.-G."/>
            <person name="Ohtsubo E."/>
            <person name="Nakayama K."/>
            <person name="Murata T."/>
            <person name="Tanaka M."/>
            <person name="Tobe T."/>
            <person name="Iida T."/>
            <person name="Takami H."/>
            <person name="Honda T."/>
            <person name="Sasakawa C."/>
            <person name="Ogasawara N."/>
            <person name="Yasunaga T."/>
            <person name="Kuhara S."/>
            <person name="Shiba T."/>
            <person name="Hattori M."/>
            <person name="Shinagawa H."/>
        </authorList>
    </citation>
    <scope>NUCLEOTIDE SEQUENCE [LARGE SCALE GENOMIC DNA]</scope>
    <source>
        <strain>O157:H7 / Sakai / RIMD 0509952 / EHEC</strain>
    </source>
</reference>